<reference key="1">
    <citation type="journal article" date="2009" name="Environ. Microbiol.">
        <title>Contribution of mobile genetic elements to Desulfovibrio vulgaris genome plasticity.</title>
        <authorList>
            <person name="Walker C.B."/>
            <person name="Stolyar S."/>
            <person name="Chivian D."/>
            <person name="Pinel N."/>
            <person name="Gabster J.A."/>
            <person name="Dehal P.S."/>
            <person name="He Z."/>
            <person name="Yang Z.K."/>
            <person name="Yen H.C."/>
            <person name="Zhou J."/>
            <person name="Wall J.D."/>
            <person name="Hazen T.C."/>
            <person name="Arkin A.P."/>
            <person name="Stahl D.A."/>
        </authorList>
    </citation>
    <scope>NUCLEOTIDE SEQUENCE [LARGE SCALE GENOMIC DNA]</scope>
    <source>
        <strain>DP4</strain>
    </source>
</reference>
<keyword id="KW-0067">ATP-binding</keyword>
<keyword id="KW-0173">Coenzyme A biosynthesis</keyword>
<keyword id="KW-0963">Cytoplasm</keyword>
<keyword id="KW-0460">Magnesium</keyword>
<keyword id="KW-0547">Nucleotide-binding</keyword>
<keyword id="KW-0548">Nucleotidyltransferase</keyword>
<keyword id="KW-0808">Transferase</keyword>
<proteinExistence type="inferred from homology"/>
<comment type="function">
    <text evidence="1">Reversibly transfers an adenylyl group from ATP to 4'-phosphopantetheine, yielding dephospho-CoA (dPCoA) and pyrophosphate.</text>
</comment>
<comment type="catalytic activity">
    <reaction evidence="1">
        <text>(R)-4'-phosphopantetheine + ATP + H(+) = 3'-dephospho-CoA + diphosphate</text>
        <dbReference type="Rhea" id="RHEA:19801"/>
        <dbReference type="ChEBI" id="CHEBI:15378"/>
        <dbReference type="ChEBI" id="CHEBI:30616"/>
        <dbReference type="ChEBI" id="CHEBI:33019"/>
        <dbReference type="ChEBI" id="CHEBI:57328"/>
        <dbReference type="ChEBI" id="CHEBI:61723"/>
        <dbReference type="EC" id="2.7.7.3"/>
    </reaction>
</comment>
<comment type="cofactor">
    <cofactor evidence="1">
        <name>Mg(2+)</name>
        <dbReference type="ChEBI" id="CHEBI:18420"/>
    </cofactor>
</comment>
<comment type="pathway">
    <text evidence="1">Cofactor biosynthesis; coenzyme A biosynthesis; CoA from (R)-pantothenate: step 4/5.</text>
</comment>
<comment type="subunit">
    <text evidence="1">Homohexamer.</text>
</comment>
<comment type="subcellular location">
    <subcellularLocation>
        <location evidence="1">Cytoplasm</location>
    </subcellularLocation>
</comment>
<comment type="similarity">
    <text evidence="1">Belongs to the bacterial CoaD family.</text>
</comment>
<evidence type="ECO:0000255" key="1">
    <source>
        <dbReference type="HAMAP-Rule" id="MF_00151"/>
    </source>
</evidence>
<gene>
    <name evidence="1" type="primary">coaD</name>
    <name type="ordered locus">Dvul_1599</name>
</gene>
<organism>
    <name type="scientific">Nitratidesulfovibrio vulgaris (strain DP4)</name>
    <name type="common">Desulfovibrio vulgaris</name>
    <dbReference type="NCBI Taxonomy" id="391774"/>
    <lineage>
        <taxon>Bacteria</taxon>
        <taxon>Pseudomonadati</taxon>
        <taxon>Thermodesulfobacteriota</taxon>
        <taxon>Desulfovibrionia</taxon>
        <taxon>Desulfovibrionales</taxon>
        <taxon>Desulfovibrionaceae</taxon>
        <taxon>Nitratidesulfovibrio</taxon>
    </lineage>
</organism>
<sequence length="186" mass="21068">MDDERGKLAVYPGTFDPLTMGHVSLIRRGRQIFDRVIVAVAMDTPKTPLFSLDERVRMAEEVFADHEGITVEPFSGLLVDYAERRGANVILRGLRAVSDFEYEFQLALMNRKLKRHVQTVFLMTDYQWLYISSTIIKAAASLGGDIKGLVPDNVYRRLREKYGYPYPLNPGLALSTEADEDLPPSL</sequence>
<dbReference type="EC" id="2.7.7.3" evidence="1"/>
<dbReference type="EMBL" id="CP000527">
    <property type="protein sequence ID" value="ABM28616.1"/>
    <property type="molecule type" value="Genomic_DNA"/>
</dbReference>
<dbReference type="RefSeq" id="WP_010938824.1">
    <property type="nucleotide sequence ID" value="NC_008751.1"/>
</dbReference>
<dbReference type="SMR" id="A1VDV0"/>
<dbReference type="KEGG" id="dvl:Dvul_1599"/>
<dbReference type="HOGENOM" id="CLU_100149_0_1_7"/>
<dbReference type="UniPathway" id="UPA00241">
    <property type="reaction ID" value="UER00355"/>
</dbReference>
<dbReference type="Proteomes" id="UP000009173">
    <property type="component" value="Chromosome"/>
</dbReference>
<dbReference type="GO" id="GO:0005737">
    <property type="term" value="C:cytoplasm"/>
    <property type="evidence" value="ECO:0007669"/>
    <property type="project" value="UniProtKB-SubCell"/>
</dbReference>
<dbReference type="GO" id="GO:0005524">
    <property type="term" value="F:ATP binding"/>
    <property type="evidence" value="ECO:0007669"/>
    <property type="project" value="UniProtKB-KW"/>
</dbReference>
<dbReference type="GO" id="GO:0004595">
    <property type="term" value="F:pantetheine-phosphate adenylyltransferase activity"/>
    <property type="evidence" value="ECO:0007669"/>
    <property type="project" value="UniProtKB-UniRule"/>
</dbReference>
<dbReference type="GO" id="GO:0015937">
    <property type="term" value="P:coenzyme A biosynthetic process"/>
    <property type="evidence" value="ECO:0007669"/>
    <property type="project" value="UniProtKB-UniRule"/>
</dbReference>
<dbReference type="CDD" id="cd02163">
    <property type="entry name" value="PPAT"/>
    <property type="match status" value="1"/>
</dbReference>
<dbReference type="Gene3D" id="3.40.50.620">
    <property type="entry name" value="HUPs"/>
    <property type="match status" value="1"/>
</dbReference>
<dbReference type="HAMAP" id="MF_00151">
    <property type="entry name" value="PPAT_bact"/>
    <property type="match status" value="1"/>
</dbReference>
<dbReference type="InterPro" id="IPR004821">
    <property type="entry name" value="Cyt_trans-like"/>
</dbReference>
<dbReference type="InterPro" id="IPR001980">
    <property type="entry name" value="PPAT"/>
</dbReference>
<dbReference type="InterPro" id="IPR014729">
    <property type="entry name" value="Rossmann-like_a/b/a_fold"/>
</dbReference>
<dbReference type="NCBIfam" id="TIGR01510">
    <property type="entry name" value="coaD_prev_kdtB"/>
    <property type="match status" value="1"/>
</dbReference>
<dbReference type="NCBIfam" id="TIGR00125">
    <property type="entry name" value="cyt_tran_rel"/>
    <property type="match status" value="1"/>
</dbReference>
<dbReference type="PANTHER" id="PTHR21342">
    <property type="entry name" value="PHOSPHOPANTETHEINE ADENYLYLTRANSFERASE"/>
    <property type="match status" value="1"/>
</dbReference>
<dbReference type="PANTHER" id="PTHR21342:SF1">
    <property type="entry name" value="PHOSPHOPANTETHEINE ADENYLYLTRANSFERASE"/>
    <property type="match status" value="1"/>
</dbReference>
<dbReference type="Pfam" id="PF01467">
    <property type="entry name" value="CTP_transf_like"/>
    <property type="match status" value="1"/>
</dbReference>
<dbReference type="PRINTS" id="PR01020">
    <property type="entry name" value="LPSBIOSNTHSS"/>
</dbReference>
<dbReference type="SUPFAM" id="SSF52374">
    <property type="entry name" value="Nucleotidylyl transferase"/>
    <property type="match status" value="1"/>
</dbReference>
<accession>A1VDV0</accession>
<protein>
    <recommendedName>
        <fullName evidence="1">Phosphopantetheine adenylyltransferase</fullName>
        <ecNumber evidence="1">2.7.7.3</ecNumber>
    </recommendedName>
    <alternativeName>
        <fullName evidence="1">Dephospho-CoA pyrophosphorylase</fullName>
    </alternativeName>
    <alternativeName>
        <fullName evidence="1">Pantetheine-phosphate adenylyltransferase</fullName>
        <shortName evidence="1">PPAT</shortName>
    </alternativeName>
</protein>
<name>COAD_NITV4</name>
<feature type="chain" id="PRO_1000011138" description="Phosphopantetheine adenylyltransferase">
    <location>
        <begin position="1"/>
        <end position="186"/>
    </location>
</feature>
<feature type="binding site" evidence="1">
    <location>
        <begin position="14"/>
        <end position="15"/>
    </location>
    <ligand>
        <name>ATP</name>
        <dbReference type="ChEBI" id="CHEBI:30616"/>
    </ligand>
</feature>
<feature type="binding site" evidence="1">
    <location>
        <position position="14"/>
    </location>
    <ligand>
        <name>substrate</name>
    </ligand>
</feature>
<feature type="binding site" evidence="1">
    <location>
        <position position="22"/>
    </location>
    <ligand>
        <name>ATP</name>
        <dbReference type="ChEBI" id="CHEBI:30616"/>
    </ligand>
</feature>
<feature type="binding site" evidence="1">
    <location>
        <position position="46"/>
    </location>
    <ligand>
        <name>substrate</name>
    </ligand>
</feature>
<feature type="binding site" evidence="1">
    <location>
        <position position="78"/>
    </location>
    <ligand>
        <name>substrate</name>
    </ligand>
</feature>
<feature type="binding site" evidence="1">
    <location>
        <position position="92"/>
    </location>
    <ligand>
        <name>substrate</name>
    </ligand>
</feature>
<feature type="binding site" evidence="1">
    <location>
        <begin position="93"/>
        <end position="95"/>
    </location>
    <ligand>
        <name>ATP</name>
        <dbReference type="ChEBI" id="CHEBI:30616"/>
    </ligand>
</feature>
<feature type="binding site" evidence="1">
    <location>
        <position position="103"/>
    </location>
    <ligand>
        <name>ATP</name>
        <dbReference type="ChEBI" id="CHEBI:30616"/>
    </ligand>
</feature>
<feature type="binding site" evidence="1">
    <location>
        <begin position="128"/>
        <end position="134"/>
    </location>
    <ligand>
        <name>ATP</name>
        <dbReference type="ChEBI" id="CHEBI:30616"/>
    </ligand>
</feature>
<feature type="site" description="Transition state stabilizer" evidence="1">
    <location>
        <position position="22"/>
    </location>
</feature>